<name>Y378_NEIG2</name>
<reference key="1">
    <citation type="journal article" date="2008" name="J. Bacteriol.">
        <title>Complete genome sequence of Neisseria gonorrhoeae NCCP11945.</title>
        <authorList>
            <person name="Chung G.T."/>
            <person name="Yoo J.S."/>
            <person name="Oh H.B."/>
            <person name="Lee Y.S."/>
            <person name="Cha S.H."/>
            <person name="Kim S.J."/>
            <person name="Yoo C.K."/>
        </authorList>
    </citation>
    <scope>NUCLEOTIDE SEQUENCE [LARGE SCALE GENOMIC DNA]</scope>
    <source>
        <strain>NCCP11945</strain>
    </source>
</reference>
<feature type="chain" id="PRO_1000138318" description="UPF0434 protein NGK_0378">
    <location>
        <begin position="1"/>
        <end position="60"/>
    </location>
</feature>
<dbReference type="EMBL" id="CP001050">
    <property type="protein sequence ID" value="ACF29071.1"/>
    <property type="molecule type" value="Genomic_DNA"/>
</dbReference>
<dbReference type="RefSeq" id="WP_002221286.1">
    <property type="nucleotide sequence ID" value="NC_011035.1"/>
</dbReference>
<dbReference type="SMR" id="B4RJR8"/>
<dbReference type="KEGG" id="ngk:NGK_0378"/>
<dbReference type="HOGENOM" id="CLU_155659_2_2_4"/>
<dbReference type="Proteomes" id="UP000002564">
    <property type="component" value="Chromosome"/>
</dbReference>
<dbReference type="GO" id="GO:0005829">
    <property type="term" value="C:cytosol"/>
    <property type="evidence" value="ECO:0007669"/>
    <property type="project" value="TreeGrafter"/>
</dbReference>
<dbReference type="FunFam" id="2.20.25.10:FF:000002">
    <property type="entry name" value="UPF0434 protein YcaR"/>
    <property type="match status" value="1"/>
</dbReference>
<dbReference type="Gene3D" id="2.20.25.10">
    <property type="match status" value="1"/>
</dbReference>
<dbReference type="HAMAP" id="MF_01187">
    <property type="entry name" value="UPF0434"/>
    <property type="match status" value="1"/>
</dbReference>
<dbReference type="InterPro" id="IPR005651">
    <property type="entry name" value="Trm112-like"/>
</dbReference>
<dbReference type="PANTHER" id="PTHR33505:SF4">
    <property type="entry name" value="PROTEIN PREY, MITOCHONDRIAL"/>
    <property type="match status" value="1"/>
</dbReference>
<dbReference type="PANTHER" id="PTHR33505">
    <property type="entry name" value="ZGC:162634"/>
    <property type="match status" value="1"/>
</dbReference>
<dbReference type="Pfam" id="PF03966">
    <property type="entry name" value="Trm112p"/>
    <property type="match status" value="1"/>
</dbReference>
<dbReference type="SUPFAM" id="SSF158997">
    <property type="entry name" value="Trm112p-like"/>
    <property type="match status" value="1"/>
</dbReference>
<organism>
    <name type="scientific">Neisseria gonorrhoeae (strain NCCP11945)</name>
    <dbReference type="NCBI Taxonomy" id="521006"/>
    <lineage>
        <taxon>Bacteria</taxon>
        <taxon>Pseudomonadati</taxon>
        <taxon>Pseudomonadota</taxon>
        <taxon>Betaproteobacteria</taxon>
        <taxon>Neisseriales</taxon>
        <taxon>Neisseriaceae</taxon>
        <taxon>Neisseria</taxon>
    </lineage>
</organism>
<comment type="similarity">
    <text evidence="1">Belongs to the UPF0434 family.</text>
</comment>
<gene>
    <name type="ordered locus">NGK_0378</name>
</gene>
<evidence type="ECO:0000255" key="1">
    <source>
        <dbReference type="HAMAP-Rule" id="MF_01187"/>
    </source>
</evidence>
<sequence length="60" mass="7065">MEKKFLDILVCPVTKGRLEYHQDKQELWSRQAKLAYPIKDGIPYMLENEARALSEEELKA</sequence>
<protein>
    <recommendedName>
        <fullName evidence="1">UPF0434 protein NGK_0378</fullName>
    </recommendedName>
</protein>
<proteinExistence type="inferred from homology"/>
<accession>B4RJR8</accession>